<name>SYE_CROS8</name>
<sequence>MKIKTRFAPSPTGYLHVGGARTALYSWLFARNQGGEFVLRIEDTDLERSTPEAIEAIMDGMNWLSLEWDEGPYFQTKRFDRYNAVIDEMLAAGTAYKCYCSKERLEALREEQMAKGEKPRYDGRCRHSHEHHADDEPCVVRFANPQDGSVVFDDQIRGPIEFSNLELDDLIIRRTDGSPTYNFCVVVDDWDMEITHVIRGEDHINNTPRQINILKALGAPVPLYAHVSMINGDDGKKLSKRHGAVSVMQYRDDGYLPEALLNYLVRLGWSHGDQEIFSREEMIKFFALDAVSKSASAFNTDKLLWLNHHYINTLAPEYVATHLQWHIEQENIDTRNGPQLAELVKLLGERCKTLKEMAQTCRYFYEDFSEFDADAAKKHLRPVARQPLEVVRDKLSALTDWTAENVHHAIQATADELEVGMGKVGMPLRVAVTGAGQSPGLDVTVHAIGKSRSVERINKALAFIAERENQQ</sequence>
<gene>
    <name evidence="1" type="primary">gltX</name>
    <name type="ordered locus">ESA_00841</name>
</gene>
<feature type="chain" id="PRO_1000001898" description="Glutamate--tRNA ligase">
    <location>
        <begin position="1"/>
        <end position="471"/>
    </location>
</feature>
<feature type="short sequence motif" description="'HIGH' region" evidence="1">
    <location>
        <begin position="9"/>
        <end position="19"/>
    </location>
</feature>
<feature type="short sequence motif" description="'KMSKS' region" evidence="1">
    <location>
        <begin position="237"/>
        <end position="241"/>
    </location>
</feature>
<feature type="binding site" evidence="1">
    <location>
        <position position="98"/>
    </location>
    <ligand>
        <name>Zn(2+)</name>
        <dbReference type="ChEBI" id="CHEBI:29105"/>
    </ligand>
</feature>
<feature type="binding site" evidence="1">
    <location>
        <position position="100"/>
    </location>
    <ligand>
        <name>Zn(2+)</name>
        <dbReference type="ChEBI" id="CHEBI:29105"/>
    </ligand>
</feature>
<feature type="binding site" evidence="1">
    <location>
        <position position="125"/>
    </location>
    <ligand>
        <name>Zn(2+)</name>
        <dbReference type="ChEBI" id="CHEBI:29105"/>
    </ligand>
</feature>
<feature type="binding site" evidence="1">
    <location>
        <position position="127"/>
    </location>
    <ligand>
        <name>Zn(2+)</name>
        <dbReference type="ChEBI" id="CHEBI:29105"/>
    </ligand>
</feature>
<feature type="binding site" evidence="1">
    <location>
        <position position="240"/>
    </location>
    <ligand>
        <name>ATP</name>
        <dbReference type="ChEBI" id="CHEBI:30616"/>
    </ligand>
</feature>
<keyword id="KW-0030">Aminoacyl-tRNA synthetase</keyword>
<keyword id="KW-0067">ATP-binding</keyword>
<keyword id="KW-0963">Cytoplasm</keyword>
<keyword id="KW-0436">Ligase</keyword>
<keyword id="KW-0479">Metal-binding</keyword>
<keyword id="KW-0547">Nucleotide-binding</keyword>
<keyword id="KW-0648">Protein biosynthesis</keyword>
<keyword id="KW-1185">Reference proteome</keyword>
<keyword id="KW-0862">Zinc</keyword>
<evidence type="ECO:0000255" key="1">
    <source>
        <dbReference type="HAMAP-Rule" id="MF_00022"/>
    </source>
</evidence>
<organism>
    <name type="scientific">Cronobacter sakazakii (strain ATCC BAA-894)</name>
    <name type="common">Enterobacter sakazakii</name>
    <dbReference type="NCBI Taxonomy" id="290339"/>
    <lineage>
        <taxon>Bacteria</taxon>
        <taxon>Pseudomonadati</taxon>
        <taxon>Pseudomonadota</taxon>
        <taxon>Gammaproteobacteria</taxon>
        <taxon>Enterobacterales</taxon>
        <taxon>Enterobacteriaceae</taxon>
        <taxon>Cronobacter</taxon>
    </lineage>
</organism>
<reference key="1">
    <citation type="journal article" date="2010" name="PLoS ONE">
        <title>Genome sequence of Cronobacter sakazakii BAA-894 and comparative genomic hybridization analysis with other Cronobacter species.</title>
        <authorList>
            <person name="Kucerova E."/>
            <person name="Clifton S.W."/>
            <person name="Xia X.Q."/>
            <person name="Long F."/>
            <person name="Porwollik S."/>
            <person name="Fulton L."/>
            <person name="Fronick C."/>
            <person name="Minx P."/>
            <person name="Kyung K."/>
            <person name="Warren W."/>
            <person name="Fulton R."/>
            <person name="Feng D."/>
            <person name="Wollam A."/>
            <person name="Shah N."/>
            <person name="Bhonagiri V."/>
            <person name="Nash W.E."/>
            <person name="Hallsworth-Pepin K."/>
            <person name="Wilson R.K."/>
            <person name="McClelland M."/>
            <person name="Forsythe S.J."/>
        </authorList>
    </citation>
    <scope>NUCLEOTIDE SEQUENCE [LARGE SCALE GENOMIC DNA]</scope>
    <source>
        <strain>ATCC BAA-894</strain>
    </source>
</reference>
<protein>
    <recommendedName>
        <fullName evidence="1">Glutamate--tRNA ligase</fullName>
        <ecNumber evidence="1">6.1.1.17</ecNumber>
    </recommendedName>
    <alternativeName>
        <fullName evidence="1">Glutamyl-tRNA synthetase</fullName>
        <shortName evidence="1">GluRS</shortName>
    </alternativeName>
</protein>
<proteinExistence type="inferred from homology"/>
<accession>A7MKV5</accession>
<dbReference type="EC" id="6.1.1.17" evidence="1"/>
<dbReference type="EMBL" id="CP000783">
    <property type="protein sequence ID" value="ABU76114.1"/>
    <property type="molecule type" value="Genomic_DNA"/>
</dbReference>
<dbReference type="RefSeq" id="WP_004388522.1">
    <property type="nucleotide sequence ID" value="NC_009778.1"/>
</dbReference>
<dbReference type="SMR" id="A7MKV5"/>
<dbReference type="KEGG" id="esa:ESA_00841"/>
<dbReference type="PATRIC" id="fig|290339.8.peg.746"/>
<dbReference type="HOGENOM" id="CLU_015768_6_3_6"/>
<dbReference type="Proteomes" id="UP000000260">
    <property type="component" value="Chromosome"/>
</dbReference>
<dbReference type="GO" id="GO:0005829">
    <property type="term" value="C:cytosol"/>
    <property type="evidence" value="ECO:0007669"/>
    <property type="project" value="TreeGrafter"/>
</dbReference>
<dbReference type="GO" id="GO:0005524">
    <property type="term" value="F:ATP binding"/>
    <property type="evidence" value="ECO:0007669"/>
    <property type="project" value="UniProtKB-UniRule"/>
</dbReference>
<dbReference type="GO" id="GO:0004818">
    <property type="term" value="F:glutamate-tRNA ligase activity"/>
    <property type="evidence" value="ECO:0007669"/>
    <property type="project" value="UniProtKB-UniRule"/>
</dbReference>
<dbReference type="GO" id="GO:0000049">
    <property type="term" value="F:tRNA binding"/>
    <property type="evidence" value="ECO:0007669"/>
    <property type="project" value="InterPro"/>
</dbReference>
<dbReference type="GO" id="GO:0008270">
    <property type="term" value="F:zinc ion binding"/>
    <property type="evidence" value="ECO:0007669"/>
    <property type="project" value="UniProtKB-UniRule"/>
</dbReference>
<dbReference type="GO" id="GO:0006424">
    <property type="term" value="P:glutamyl-tRNA aminoacylation"/>
    <property type="evidence" value="ECO:0007669"/>
    <property type="project" value="UniProtKB-UniRule"/>
</dbReference>
<dbReference type="CDD" id="cd00808">
    <property type="entry name" value="GluRS_core"/>
    <property type="match status" value="1"/>
</dbReference>
<dbReference type="FunFam" id="1.10.10.350:FF:000001">
    <property type="entry name" value="Glutamate--tRNA ligase"/>
    <property type="match status" value="1"/>
</dbReference>
<dbReference type="FunFam" id="3.40.50.620:FF:000007">
    <property type="entry name" value="Glutamate--tRNA ligase"/>
    <property type="match status" value="1"/>
</dbReference>
<dbReference type="Gene3D" id="1.10.10.350">
    <property type="match status" value="1"/>
</dbReference>
<dbReference type="Gene3D" id="3.40.50.620">
    <property type="entry name" value="HUPs"/>
    <property type="match status" value="1"/>
</dbReference>
<dbReference type="HAMAP" id="MF_00022">
    <property type="entry name" value="Glu_tRNA_synth_type1"/>
    <property type="match status" value="1"/>
</dbReference>
<dbReference type="InterPro" id="IPR045462">
    <property type="entry name" value="aa-tRNA-synth_I_cd-bd"/>
</dbReference>
<dbReference type="InterPro" id="IPR020751">
    <property type="entry name" value="aa-tRNA-synth_I_codon-bd_sub2"/>
</dbReference>
<dbReference type="InterPro" id="IPR001412">
    <property type="entry name" value="aa-tRNA-synth_I_CS"/>
</dbReference>
<dbReference type="InterPro" id="IPR008925">
    <property type="entry name" value="aa_tRNA-synth_I_cd-bd_sf"/>
</dbReference>
<dbReference type="InterPro" id="IPR004527">
    <property type="entry name" value="Glu-tRNA-ligase_bac/mito"/>
</dbReference>
<dbReference type="InterPro" id="IPR000924">
    <property type="entry name" value="Glu/Gln-tRNA-synth"/>
</dbReference>
<dbReference type="InterPro" id="IPR020058">
    <property type="entry name" value="Glu/Gln-tRNA-synth_Ib_cat-dom"/>
</dbReference>
<dbReference type="InterPro" id="IPR049940">
    <property type="entry name" value="GluQ/Sye"/>
</dbReference>
<dbReference type="InterPro" id="IPR033910">
    <property type="entry name" value="GluRS_core"/>
</dbReference>
<dbReference type="InterPro" id="IPR014729">
    <property type="entry name" value="Rossmann-like_a/b/a_fold"/>
</dbReference>
<dbReference type="NCBIfam" id="TIGR00464">
    <property type="entry name" value="gltX_bact"/>
    <property type="match status" value="1"/>
</dbReference>
<dbReference type="PANTHER" id="PTHR43311">
    <property type="entry name" value="GLUTAMATE--TRNA LIGASE"/>
    <property type="match status" value="1"/>
</dbReference>
<dbReference type="PANTHER" id="PTHR43311:SF2">
    <property type="entry name" value="GLUTAMATE--TRNA LIGASE, MITOCHONDRIAL-RELATED"/>
    <property type="match status" value="1"/>
</dbReference>
<dbReference type="Pfam" id="PF19269">
    <property type="entry name" value="Anticodon_2"/>
    <property type="match status" value="1"/>
</dbReference>
<dbReference type="Pfam" id="PF00749">
    <property type="entry name" value="tRNA-synt_1c"/>
    <property type="match status" value="1"/>
</dbReference>
<dbReference type="PRINTS" id="PR00987">
    <property type="entry name" value="TRNASYNTHGLU"/>
</dbReference>
<dbReference type="SUPFAM" id="SSF48163">
    <property type="entry name" value="An anticodon-binding domain of class I aminoacyl-tRNA synthetases"/>
    <property type="match status" value="1"/>
</dbReference>
<dbReference type="SUPFAM" id="SSF52374">
    <property type="entry name" value="Nucleotidylyl transferase"/>
    <property type="match status" value="1"/>
</dbReference>
<dbReference type="PROSITE" id="PS00178">
    <property type="entry name" value="AA_TRNA_LIGASE_I"/>
    <property type="match status" value="1"/>
</dbReference>
<comment type="function">
    <text evidence="1">Catalyzes the attachment of glutamate to tRNA(Glu) in a two-step reaction: glutamate is first activated by ATP to form Glu-AMP and then transferred to the acceptor end of tRNA(Glu).</text>
</comment>
<comment type="catalytic activity">
    <reaction evidence="1">
        <text>tRNA(Glu) + L-glutamate + ATP = L-glutamyl-tRNA(Glu) + AMP + diphosphate</text>
        <dbReference type="Rhea" id="RHEA:23540"/>
        <dbReference type="Rhea" id="RHEA-COMP:9663"/>
        <dbReference type="Rhea" id="RHEA-COMP:9680"/>
        <dbReference type="ChEBI" id="CHEBI:29985"/>
        <dbReference type="ChEBI" id="CHEBI:30616"/>
        <dbReference type="ChEBI" id="CHEBI:33019"/>
        <dbReference type="ChEBI" id="CHEBI:78442"/>
        <dbReference type="ChEBI" id="CHEBI:78520"/>
        <dbReference type="ChEBI" id="CHEBI:456215"/>
        <dbReference type="EC" id="6.1.1.17"/>
    </reaction>
</comment>
<comment type="cofactor">
    <cofactor evidence="1">
        <name>Zn(2+)</name>
        <dbReference type="ChEBI" id="CHEBI:29105"/>
    </cofactor>
    <text evidence="1">Binds 1 zinc ion per subunit.</text>
</comment>
<comment type="subunit">
    <text evidence="1">Monomer.</text>
</comment>
<comment type="subcellular location">
    <subcellularLocation>
        <location evidence="1">Cytoplasm</location>
    </subcellularLocation>
</comment>
<comment type="similarity">
    <text evidence="1">Belongs to the class-I aminoacyl-tRNA synthetase family. Glutamate--tRNA ligase type 1 subfamily.</text>
</comment>